<dbReference type="EC" id="2.7.2.4"/>
<dbReference type="EMBL" id="CP000087">
    <property type="protein sequence ID" value="ABE05485.1"/>
    <property type="molecule type" value="Genomic_DNA"/>
</dbReference>
<dbReference type="RefSeq" id="WP_011478054.1">
    <property type="nucleotide sequence ID" value="NC_007940.1"/>
</dbReference>
<dbReference type="SMR" id="Q1RGM9"/>
<dbReference type="KEGG" id="rbe:RBE_1404"/>
<dbReference type="eggNOG" id="COG0527">
    <property type="taxonomic scope" value="Bacteria"/>
</dbReference>
<dbReference type="HOGENOM" id="CLU_009116_3_2_5"/>
<dbReference type="OrthoDB" id="9799110at2"/>
<dbReference type="UniPathway" id="UPA00034">
    <property type="reaction ID" value="UER00015"/>
</dbReference>
<dbReference type="UniPathway" id="UPA00050">
    <property type="reaction ID" value="UER00461"/>
</dbReference>
<dbReference type="UniPathway" id="UPA00051">
    <property type="reaction ID" value="UER00462"/>
</dbReference>
<dbReference type="Proteomes" id="UP000001951">
    <property type="component" value="Chromosome"/>
</dbReference>
<dbReference type="GO" id="GO:0005829">
    <property type="term" value="C:cytosol"/>
    <property type="evidence" value="ECO:0007669"/>
    <property type="project" value="TreeGrafter"/>
</dbReference>
<dbReference type="GO" id="GO:0004072">
    <property type="term" value="F:aspartate kinase activity"/>
    <property type="evidence" value="ECO:0007669"/>
    <property type="project" value="UniProtKB-EC"/>
</dbReference>
<dbReference type="GO" id="GO:0005524">
    <property type="term" value="F:ATP binding"/>
    <property type="evidence" value="ECO:0007669"/>
    <property type="project" value="UniProtKB-KW"/>
</dbReference>
<dbReference type="GO" id="GO:0019877">
    <property type="term" value="P:diaminopimelate biosynthetic process"/>
    <property type="evidence" value="ECO:0007669"/>
    <property type="project" value="UniProtKB-KW"/>
</dbReference>
<dbReference type="GO" id="GO:0009090">
    <property type="term" value="P:homoserine biosynthetic process"/>
    <property type="evidence" value="ECO:0007669"/>
    <property type="project" value="TreeGrafter"/>
</dbReference>
<dbReference type="GO" id="GO:0009089">
    <property type="term" value="P:lysine biosynthetic process via diaminopimelate"/>
    <property type="evidence" value="ECO:0007669"/>
    <property type="project" value="UniProtKB-UniPathway"/>
</dbReference>
<dbReference type="GO" id="GO:0009088">
    <property type="term" value="P:threonine biosynthetic process"/>
    <property type="evidence" value="ECO:0007669"/>
    <property type="project" value="UniProtKB-UniPathway"/>
</dbReference>
<dbReference type="CDD" id="cd04261">
    <property type="entry name" value="AAK_AKii-LysC-BS"/>
    <property type="match status" value="1"/>
</dbReference>
<dbReference type="Gene3D" id="3.40.1160.10">
    <property type="entry name" value="Acetylglutamate kinase-like"/>
    <property type="match status" value="1"/>
</dbReference>
<dbReference type="Gene3D" id="3.30.2130.10">
    <property type="entry name" value="VC0802-like"/>
    <property type="match status" value="1"/>
</dbReference>
<dbReference type="InterPro" id="IPR036393">
    <property type="entry name" value="AceGlu_kinase-like_sf"/>
</dbReference>
<dbReference type="InterPro" id="IPR045865">
    <property type="entry name" value="ACT-like_dom_sf"/>
</dbReference>
<dbReference type="InterPro" id="IPR054352">
    <property type="entry name" value="ACT_Aspartokinase"/>
</dbReference>
<dbReference type="InterPro" id="IPR002912">
    <property type="entry name" value="ACT_dom"/>
</dbReference>
<dbReference type="InterPro" id="IPR041740">
    <property type="entry name" value="AKii-LysC-BS"/>
</dbReference>
<dbReference type="InterPro" id="IPR001048">
    <property type="entry name" value="Asp/Glu/Uridylate_kinase"/>
</dbReference>
<dbReference type="InterPro" id="IPR005260">
    <property type="entry name" value="Asp_kin_monofn"/>
</dbReference>
<dbReference type="InterPro" id="IPR001341">
    <property type="entry name" value="Asp_kinase"/>
</dbReference>
<dbReference type="InterPro" id="IPR018042">
    <property type="entry name" value="Aspartate_kinase_CS"/>
</dbReference>
<dbReference type="NCBIfam" id="TIGR00657">
    <property type="entry name" value="asp_kinases"/>
    <property type="match status" value="1"/>
</dbReference>
<dbReference type="NCBIfam" id="NF005154">
    <property type="entry name" value="PRK06635.1-2"/>
    <property type="match status" value="1"/>
</dbReference>
<dbReference type="NCBIfam" id="NF005155">
    <property type="entry name" value="PRK06635.1-4"/>
    <property type="match status" value="1"/>
</dbReference>
<dbReference type="NCBIfam" id="NF005158">
    <property type="entry name" value="PRK06635.2-2"/>
    <property type="match status" value="1"/>
</dbReference>
<dbReference type="PANTHER" id="PTHR21499">
    <property type="entry name" value="ASPARTATE KINASE"/>
    <property type="match status" value="1"/>
</dbReference>
<dbReference type="PANTHER" id="PTHR21499:SF3">
    <property type="entry name" value="ASPARTOKINASE"/>
    <property type="match status" value="1"/>
</dbReference>
<dbReference type="Pfam" id="PF00696">
    <property type="entry name" value="AA_kinase"/>
    <property type="match status" value="1"/>
</dbReference>
<dbReference type="Pfam" id="PF22468">
    <property type="entry name" value="ACT_9"/>
    <property type="match status" value="1"/>
</dbReference>
<dbReference type="PIRSF" id="PIRSF000726">
    <property type="entry name" value="Asp_kin"/>
    <property type="match status" value="1"/>
</dbReference>
<dbReference type="SUPFAM" id="SSF55021">
    <property type="entry name" value="ACT-like"/>
    <property type="match status" value="1"/>
</dbReference>
<dbReference type="SUPFAM" id="SSF53633">
    <property type="entry name" value="Carbamate kinase-like"/>
    <property type="match status" value="1"/>
</dbReference>
<dbReference type="PROSITE" id="PS51671">
    <property type="entry name" value="ACT"/>
    <property type="match status" value="1"/>
</dbReference>
<dbReference type="PROSITE" id="PS00324">
    <property type="entry name" value="ASPARTOKINASE"/>
    <property type="match status" value="1"/>
</dbReference>
<protein>
    <recommendedName>
        <fullName>Aspartokinase</fullName>
        <ecNumber>2.7.2.4</ecNumber>
    </recommendedName>
    <alternativeName>
        <fullName>Aspartate kinase</fullName>
    </alternativeName>
</protein>
<organism>
    <name type="scientific">Rickettsia bellii (strain RML369-C)</name>
    <dbReference type="NCBI Taxonomy" id="336407"/>
    <lineage>
        <taxon>Bacteria</taxon>
        <taxon>Pseudomonadati</taxon>
        <taxon>Pseudomonadota</taxon>
        <taxon>Alphaproteobacteria</taxon>
        <taxon>Rickettsiales</taxon>
        <taxon>Rickettsiaceae</taxon>
        <taxon>Rickettsieae</taxon>
        <taxon>Rickettsia</taxon>
        <taxon>belli group</taxon>
    </lineage>
</organism>
<sequence>MALIIQKFGGTSVTTIDRIKKIIPIIKAEIAKNNQVIIVVSAMAGVTNQLVTLCNEVSSLNKSSQLAEYDVALSSGEIVTASLLALALQEENINARSFLAWQLPILTDDNHSKALVESVDTNLLNECLQQNIIPIIAGFQGINKHNRLATLGRGGSDTTAALIAAAMKADRCDIYTDVEGVFAADPRIIPKAKKIDEIDFSEMLELALSGAKVLHSRAAEIVMRYQIDMRILSTFAPEAGCTLITSKDKIMEKRIISGITSNKNLLYITIESSSLNFIQVASIIAQNNNHIEVMQEIEPNKRYSFITNLTDKNSLHILLTNLKNNNQISNFTFDTEIATVSIIGHGIKNDLKLLEVILSKLAKDNINVQMVQISEIKIILLINDKQVEKTVLDLYDLLKISETGHC</sequence>
<gene>
    <name type="primary">lysC</name>
    <name type="ordered locus">RBE_1404</name>
</gene>
<proteinExistence type="inferred from homology"/>
<keyword id="KW-0028">Amino-acid biosynthesis</keyword>
<keyword id="KW-0067">ATP-binding</keyword>
<keyword id="KW-0220">Diaminopimelate biosynthesis</keyword>
<keyword id="KW-0418">Kinase</keyword>
<keyword id="KW-0457">Lysine biosynthesis</keyword>
<keyword id="KW-0547">Nucleotide-binding</keyword>
<keyword id="KW-0808">Transferase</keyword>
<feature type="chain" id="PRO_0000288718" description="Aspartokinase">
    <location>
        <begin position="1"/>
        <end position="406"/>
    </location>
</feature>
<feature type="domain" description="ACT" evidence="1">
    <location>
        <begin position="342"/>
        <end position="406"/>
    </location>
</feature>
<accession>Q1RGM9</accession>
<comment type="catalytic activity">
    <reaction>
        <text>L-aspartate + ATP = 4-phospho-L-aspartate + ADP</text>
        <dbReference type="Rhea" id="RHEA:23776"/>
        <dbReference type="ChEBI" id="CHEBI:29991"/>
        <dbReference type="ChEBI" id="CHEBI:30616"/>
        <dbReference type="ChEBI" id="CHEBI:57535"/>
        <dbReference type="ChEBI" id="CHEBI:456216"/>
        <dbReference type="EC" id="2.7.2.4"/>
    </reaction>
</comment>
<comment type="pathway">
    <text>Amino-acid biosynthesis; L-lysine biosynthesis via DAP pathway; (S)-tetrahydrodipicolinate from L-aspartate: step 1/4.</text>
</comment>
<comment type="pathway">
    <text>Amino-acid biosynthesis; L-methionine biosynthesis via de novo pathway; L-homoserine from L-aspartate: step 1/3.</text>
</comment>
<comment type="pathway">
    <text>Amino-acid biosynthesis; L-threonine biosynthesis; L-threonine from L-aspartate: step 1/5.</text>
</comment>
<comment type="similarity">
    <text evidence="2">Belongs to the aspartokinase family.</text>
</comment>
<evidence type="ECO:0000255" key="1">
    <source>
        <dbReference type="PROSITE-ProRule" id="PRU01007"/>
    </source>
</evidence>
<evidence type="ECO:0000305" key="2"/>
<name>AK_RICBR</name>
<reference key="1">
    <citation type="journal article" date="2006" name="PLoS Genet.">
        <title>Genome sequence of Rickettsia bellii illuminates the role of amoebae in gene exchanges between intracellular pathogens.</title>
        <authorList>
            <person name="Ogata H."/>
            <person name="La Scola B."/>
            <person name="Audic S."/>
            <person name="Renesto P."/>
            <person name="Blanc G."/>
            <person name="Robert C."/>
            <person name="Fournier P.-E."/>
            <person name="Claverie J.-M."/>
            <person name="Raoult D."/>
        </authorList>
    </citation>
    <scope>NUCLEOTIDE SEQUENCE [LARGE SCALE GENOMIC DNA]</scope>
    <source>
        <strain>RML369-C</strain>
    </source>
</reference>